<accession>Q6HSF4</accession>
<accession>Q6KLP9</accession>
<accession>Q81KZ7</accession>
<organism>
    <name type="scientific">Bacillus anthracis</name>
    <dbReference type="NCBI Taxonomy" id="1392"/>
    <lineage>
        <taxon>Bacteria</taxon>
        <taxon>Bacillati</taxon>
        <taxon>Bacillota</taxon>
        <taxon>Bacilli</taxon>
        <taxon>Bacillales</taxon>
        <taxon>Bacillaceae</taxon>
        <taxon>Bacillus</taxon>
        <taxon>Bacillus cereus group</taxon>
    </lineage>
</organism>
<dbReference type="EC" id="1.1.1.37" evidence="1"/>
<dbReference type="EMBL" id="AE016879">
    <property type="protein sequence ID" value="AAP28526.1"/>
    <property type="molecule type" value="Genomic_DNA"/>
</dbReference>
<dbReference type="EMBL" id="AE017334">
    <property type="protein sequence ID" value="AAT33956.1"/>
    <property type="molecule type" value="Genomic_DNA"/>
</dbReference>
<dbReference type="EMBL" id="AE017225">
    <property type="protein sequence ID" value="AAT56784.1"/>
    <property type="molecule type" value="Genomic_DNA"/>
</dbReference>
<dbReference type="RefSeq" id="NP_847040.1">
    <property type="nucleotide sequence ID" value="NC_003997.3"/>
</dbReference>
<dbReference type="RefSeq" id="WP_000153232.1">
    <property type="nucleotide sequence ID" value="NZ_WXXJ01000026.1"/>
</dbReference>
<dbReference type="RefSeq" id="YP_030734.1">
    <property type="nucleotide sequence ID" value="NC_005945.1"/>
</dbReference>
<dbReference type="PDB" id="3TL2">
    <property type="method" value="X-ray"/>
    <property type="resolution" value="1.70 A"/>
    <property type="chains" value="A=1-312"/>
</dbReference>
<dbReference type="PDBsum" id="3TL2"/>
<dbReference type="SMR" id="Q6HSF4"/>
<dbReference type="STRING" id="261594.GBAA_4837"/>
<dbReference type="DNASU" id="1083988"/>
<dbReference type="GeneID" id="93006518"/>
<dbReference type="KEGG" id="ban:BA_4837"/>
<dbReference type="KEGG" id="bar:GBAA_4837"/>
<dbReference type="KEGG" id="bat:BAS4486"/>
<dbReference type="PATRIC" id="fig|198094.11.peg.4798"/>
<dbReference type="eggNOG" id="COG0039">
    <property type="taxonomic scope" value="Bacteria"/>
</dbReference>
<dbReference type="HOGENOM" id="CLU_045401_2_1_9"/>
<dbReference type="OMA" id="ASCAEYI"/>
<dbReference type="OrthoDB" id="9802969at2"/>
<dbReference type="EvolutionaryTrace" id="Q6HSF4"/>
<dbReference type="Proteomes" id="UP000000427">
    <property type="component" value="Chromosome"/>
</dbReference>
<dbReference type="Proteomes" id="UP000000594">
    <property type="component" value="Chromosome"/>
</dbReference>
<dbReference type="GO" id="GO:0004459">
    <property type="term" value="F:L-lactate dehydrogenase activity"/>
    <property type="evidence" value="ECO:0007669"/>
    <property type="project" value="TreeGrafter"/>
</dbReference>
<dbReference type="GO" id="GO:0030060">
    <property type="term" value="F:L-malate dehydrogenase (NAD+) activity"/>
    <property type="evidence" value="ECO:0007669"/>
    <property type="project" value="UniProtKB-UniRule"/>
</dbReference>
<dbReference type="GO" id="GO:0006089">
    <property type="term" value="P:lactate metabolic process"/>
    <property type="evidence" value="ECO:0007669"/>
    <property type="project" value="TreeGrafter"/>
</dbReference>
<dbReference type="GO" id="GO:0006099">
    <property type="term" value="P:tricarboxylic acid cycle"/>
    <property type="evidence" value="ECO:0007669"/>
    <property type="project" value="UniProtKB-UniRule"/>
</dbReference>
<dbReference type="CDD" id="cd01339">
    <property type="entry name" value="LDH-like_MDH"/>
    <property type="match status" value="1"/>
</dbReference>
<dbReference type="FunFam" id="3.40.50.720:FF:000018">
    <property type="entry name" value="Malate dehydrogenase"/>
    <property type="match status" value="1"/>
</dbReference>
<dbReference type="FunFam" id="3.90.110.10:FF:000004">
    <property type="entry name" value="Malate dehydrogenase"/>
    <property type="match status" value="1"/>
</dbReference>
<dbReference type="Gene3D" id="3.90.110.10">
    <property type="entry name" value="Lactate dehydrogenase/glycoside hydrolase, family 4, C-terminal"/>
    <property type="match status" value="1"/>
</dbReference>
<dbReference type="Gene3D" id="3.40.50.720">
    <property type="entry name" value="NAD(P)-binding Rossmann-like Domain"/>
    <property type="match status" value="1"/>
</dbReference>
<dbReference type="HAMAP" id="MF_00487">
    <property type="entry name" value="Malate_dehydrog_3"/>
    <property type="match status" value="1"/>
</dbReference>
<dbReference type="InterPro" id="IPR001557">
    <property type="entry name" value="L-lactate/malate_DH"/>
</dbReference>
<dbReference type="InterPro" id="IPR022383">
    <property type="entry name" value="Lactate/malate_DH_C"/>
</dbReference>
<dbReference type="InterPro" id="IPR001236">
    <property type="entry name" value="Lactate/malate_DH_N"/>
</dbReference>
<dbReference type="InterPro" id="IPR015955">
    <property type="entry name" value="Lactate_DH/Glyco_Ohase_4_C"/>
</dbReference>
<dbReference type="InterPro" id="IPR011275">
    <property type="entry name" value="Malate_DH_type3"/>
</dbReference>
<dbReference type="InterPro" id="IPR036291">
    <property type="entry name" value="NAD(P)-bd_dom_sf"/>
</dbReference>
<dbReference type="NCBIfam" id="TIGR01763">
    <property type="entry name" value="MalateDH_bact"/>
    <property type="match status" value="1"/>
</dbReference>
<dbReference type="NCBIfam" id="NF004863">
    <property type="entry name" value="PRK06223.1"/>
    <property type="match status" value="1"/>
</dbReference>
<dbReference type="PANTHER" id="PTHR43128">
    <property type="entry name" value="L-2-HYDROXYCARBOXYLATE DEHYDROGENASE (NAD(P)(+))"/>
    <property type="match status" value="1"/>
</dbReference>
<dbReference type="PANTHER" id="PTHR43128:SF16">
    <property type="entry name" value="L-LACTATE DEHYDROGENASE"/>
    <property type="match status" value="1"/>
</dbReference>
<dbReference type="Pfam" id="PF02866">
    <property type="entry name" value="Ldh_1_C"/>
    <property type="match status" value="1"/>
</dbReference>
<dbReference type="Pfam" id="PF00056">
    <property type="entry name" value="Ldh_1_N"/>
    <property type="match status" value="1"/>
</dbReference>
<dbReference type="PIRSF" id="PIRSF000102">
    <property type="entry name" value="Lac_mal_DH"/>
    <property type="match status" value="1"/>
</dbReference>
<dbReference type="PRINTS" id="PR00086">
    <property type="entry name" value="LLDHDRGNASE"/>
</dbReference>
<dbReference type="SUPFAM" id="SSF56327">
    <property type="entry name" value="LDH C-terminal domain-like"/>
    <property type="match status" value="1"/>
</dbReference>
<dbReference type="SUPFAM" id="SSF51735">
    <property type="entry name" value="NAD(P)-binding Rossmann-fold domains"/>
    <property type="match status" value="1"/>
</dbReference>
<protein>
    <recommendedName>
        <fullName evidence="1">Malate dehydrogenase</fullName>
        <ecNumber evidence="1">1.1.1.37</ecNumber>
    </recommendedName>
</protein>
<keyword id="KW-0002">3D-structure</keyword>
<keyword id="KW-0520">NAD</keyword>
<keyword id="KW-0560">Oxidoreductase</keyword>
<keyword id="KW-0597">Phosphoprotein</keyword>
<keyword id="KW-1185">Reference proteome</keyword>
<keyword id="KW-0816">Tricarboxylic acid cycle</keyword>
<gene>
    <name evidence="1" type="primary">mdh</name>
    <name type="ordered locus">BA_4837</name>
    <name type="ordered locus">GBAA_4837</name>
    <name type="ordered locus">BAS4486</name>
</gene>
<name>MDH_BACAN</name>
<comment type="function">
    <text evidence="1">Catalyzes the reversible oxidation of malate to oxaloacetate.</text>
</comment>
<comment type="catalytic activity">
    <reaction evidence="1">
        <text>(S)-malate + NAD(+) = oxaloacetate + NADH + H(+)</text>
        <dbReference type="Rhea" id="RHEA:21432"/>
        <dbReference type="ChEBI" id="CHEBI:15378"/>
        <dbReference type="ChEBI" id="CHEBI:15589"/>
        <dbReference type="ChEBI" id="CHEBI:16452"/>
        <dbReference type="ChEBI" id="CHEBI:57540"/>
        <dbReference type="ChEBI" id="CHEBI:57945"/>
        <dbReference type="EC" id="1.1.1.37"/>
    </reaction>
</comment>
<comment type="similarity">
    <text evidence="1">Belongs to the LDH/MDH superfamily. MDH type 3 family.</text>
</comment>
<reference key="1">
    <citation type="journal article" date="2003" name="Nature">
        <title>The genome sequence of Bacillus anthracis Ames and comparison to closely related bacteria.</title>
        <authorList>
            <person name="Read T.D."/>
            <person name="Peterson S.N."/>
            <person name="Tourasse N.J."/>
            <person name="Baillie L.W."/>
            <person name="Paulsen I.T."/>
            <person name="Nelson K.E."/>
            <person name="Tettelin H."/>
            <person name="Fouts D.E."/>
            <person name="Eisen J.A."/>
            <person name="Gill S.R."/>
            <person name="Holtzapple E.K."/>
            <person name="Okstad O.A."/>
            <person name="Helgason E."/>
            <person name="Rilstone J."/>
            <person name="Wu M."/>
            <person name="Kolonay J.F."/>
            <person name="Beanan M.J."/>
            <person name="Dodson R.J."/>
            <person name="Brinkac L.M."/>
            <person name="Gwinn M.L."/>
            <person name="DeBoy R.T."/>
            <person name="Madpu R."/>
            <person name="Daugherty S.C."/>
            <person name="Durkin A.S."/>
            <person name="Haft D.H."/>
            <person name="Nelson W.C."/>
            <person name="Peterson J.D."/>
            <person name="Pop M."/>
            <person name="Khouri H.M."/>
            <person name="Radune D."/>
            <person name="Benton J.L."/>
            <person name="Mahamoud Y."/>
            <person name="Jiang L."/>
            <person name="Hance I.R."/>
            <person name="Weidman J.F."/>
            <person name="Berry K.J."/>
            <person name="Plaut R.D."/>
            <person name="Wolf A.M."/>
            <person name="Watkins K.L."/>
            <person name="Nierman W.C."/>
            <person name="Hazen A."/>
            <person name="Cline R.T."/>
            <person name="Redmond C."/>
            <person name="Thwaite J.E."/>
            <person name="White O."/>
            <person name="Salzberg S.L."/>
            <person name="Thomason B."/>
            <person name="Friedlander A.M."/>
            <person name="Koehler T.M."/>
            <person name="Hanna P.C."/>
            <person name="Kolstoe A.-B."/>
            <person name="Fraser C.M."/>
        </authorList>
    </citation>
    <scope>NUCLEOTIDE SEQUENCE [LARGE SCALE GENOMIC DNA]</scope>
    <source>
        <strain>Ames / isolate Porton</strain>
    </source>
</reference>
<reference key="2">
    <citation type="journal article" date="2009" name="J. Bacteriol.">
        <title>The complete genome sequence of Bacillus anthracis Ames 'Ancestor'.</title>
        <authorList>
            <person name="Ravel J."/>
            <person name="Jiang L."/>
            <person name="Stanley S.T."/>
            <person name="Wilson M.R."/>
            <person name="Decker R.S."/>
            <person name="Read T.D."/>
            <person name="Worsham P."/>
            <person name="Keim P.S."/>
            <person name="Salzberg S.L."/>
            <person name="Fraser-Liggett C.M."/>
            <person name="Rasko D.A."/>
        </authorList>
    </citation>
    <scope>NUCLEOTIDE SEQUENCE [LARGE SCALE GENOMIC DNA]</scope>
    <source>
        <strain>Ames ancestor</strain>
    </source>
</reference>
<reference key="3">
    <citation type="submission" date="2004-01" db="EMBL/GenBank/DDBJ databases">
        <title>Complete genome sequence of Bacillus anthracis Sterne.</title>
        <authorList>
            <person name="Brettin T.S."/>
            <person name="Bruce D."/>
            <person name="Challacombe J.F."/>
            <person name="Gilna P."/>
            <person name="Han C."/>
            <person name="Hill K."/>
            <person name="Hitchcock P."/>
            <person name="Jackson P."/>
            <person name="Keim P."/>
            <person name="Longmire J."/>
            <person name="Lucas S."/>
            <person name="Okinaka R."/>
            <person name="Richardson P."/>
            <person name="Rubin E."/>
            <person name="Tice H."/>
        </authorList>
    </citation>
    <scope>NUCLEOTIDE SEQUENCE [LARGE SCALE GENOMIC DNA]</scope>
    <source>
        <strain>Sterne</strain>
    </source>
</reference>
<evidence type="ECO:0000255" key="1">
    <source>
        <dbReference type="HAMAP-Rule" id="MF_00487"/>
    </source>
</evidence>
<evidence type="ECO:0007829" key="2">
    <source>
        <dbReference type="PDB" id="3TL2"/>
    </source>
</evidence>
<proteinExistence type="evidence at protein level"/>
<feature type="chain" id="PRO_0000113424" description="Malate dehydrogenase">
    <location>
        <begin position="1"/>
        <end position="312"/>
    </location>
</feature>
<feature type="active site" description="Proton acceptor" evidence="1">
    <location>
        <position position="180"/>
    </location>
</feature>
<feature type="binding site" evidence="1">
    <location>
        <begin position="12"/>
        <end position="17"/>
    </location>
    <ligand>
        <name>NAD(+)</name>
        <dbReference type="ChEBI" id="CHEBI:57540"/>
    </ligand>
</feature>
<feature type="binding site" evidence="1">
    <location>
        <position position="36"/>
    </location>
    <ligand>
        <name>NAD(+)</name>
        <dbReference type="ChEBI" id="CHEBI:57540"/>
    </ligand>
</feature>
<feature type="binding site" evidence="1">
    <location>
        <position position="87"/>
    </location>
    <ligand>
        <name>substrate</name>
    </ligand>
</feature>
<feature type="binding site" evidence="1">
    <location>
        <position position="93"/>
    </location>
    <ligand>
        <name>substrate</name>
    </ligand>
</feature>
<feature type="binding site" evidence="1">
    <location>
        <position position="100"/>
    </location>
    <ligand>
        <name>NAD(+)</name>
        <dbReference type="ChEBI" id="CHEBI:57540"/>
    </ligand>
</feature>
<feature type="binding site" evidence="1">
    <location>
        <begin position="123"/>
        <end position="125"/>
    </location>
    <ligand>
        <name>NAD(+)</name>
        <dbReference type="ChEBI" id="CHEBI:57540"/>
    </ligand>
</feature>
<feature type="binding site" evidence="1">
    <location>
        <position position="125"/>
    </location>
    <ligand>
        <name>substrate</name>
    </ligand>
</feature>
<feature type="binding site" evidence="1">
    <location>
        <position position="156"/>
    </location>
    <ligand>
        <name>substrate</name>
    </ligand>
</feature>
<feature type="modified residue" description="Phosphoserine" evidence="1">
    <location>
        <position position="149"/>
    </location>
</feature>
<feature type="strand" evidence="2">
    <location>
        <begin position="7"/>
        <end position="11"/>
    </location>
</feature>
<feature type="helix" evidence="2">
    <location>
        <begin position="15"/>
        <end position="26"/>
    </location>
</feature>
<feature type="strand" evidence="2">
    <location>
        <begin position="31"/>
        <end position="35"/>
    </location>
</feature>
<feature type="helix" evidence="2">
    <location>
        <begin position="38"/>
        <end position="40"/>
    </location>
</feature>
<feature type="helix" evidence="2">
    <location>
        <begin position="41"/>
        <end position="58"/>
    </location>
</feature>
<feature type="strand" evidence="2">
    <location>
        <begin position="64"/>
        <end position="68"/>
    </location>
</feature>
<feature type="helix" evidence="2">
    <location>
        <begin position="70"/>
        <end position="73"/>
    </location>
</feature>
<feature type="strand" evidence="2">
    <location>
        <begin position="77"/>
        <end position="81"/>
    </location>
</feature>
<feature type="helix" evidence="2">
    <location>
        <begin position="93"/>
        <end position="114"/>
    </location>
</feature>
<feature type="strand" evidence="2">
    <location>
        <begin position="119"/>
        <end position="122"/>
    </location>
</feature>
<feature type="helix" evidence="2">
    <location>
        <begin position="127"/>
        <end position="138"/>
    </location>
</feature>
<feature type="helix" evidence="2">
    <location>
        <begin position="142"/>
        <end position="144"/>
    </location>
</feature>
<feature type="strand" evidence="2">
    <location>
        <begin position="145"/>
        <end position="147"/>
    </location>
</feature>
<feature type="helix" evidence="2">
    <location>
        <begin position="150"/>
        <end position="165"/>
    </location>
</feature>
<feature type="helix" evidence="2">
    <location>
        <begin position="169"/>
        <end position="171"/>
    </location>
</feature>
<feature type="strand" evidence="2">
    <location>
        <begin position="176"/>
        <end position="178"/>
    </location>
</feature>
<feature type="helix" evidence="2">
    <location>
        <begin position="181"/>
        <end position="183"/>
    </location>
</feature>
<feature type="helix" evidence="2">
    <location>
        <begin position="188"/>
        <end position="190"/>
    </location>
</feature>
<feature type="helix" evidence="2">
    <location>
        <begin position="198"/>
        <end position="200"/>
    </location>
</feature>
<feature type="helix" evidence="2">
    <location>
        <begin position="204"/>
        <end position="215"/>
    </location>
</feature>
<feature type="helix" evidence="2">
    <location>
        <begin position="217"/>
        <end position="225"/>
    </location>
</feature>
<feature type="strand" evidence="2">
    <location>
        <begin position="226"/>
        <end position="228"/>
    </location>
</feature>
<feature type="helix" evidence="2">
    <location>
        <begin position="232"/>
        <end position="246"/>
    </location>
</feature>
<feature type="strand" evidence="2">
    <location>
        <begin position="251"/>
        <end position="261"/>
    </location>
</feature>
<feature type="helix" evidence="2">
    <location>
        <begin position="262"/>
        <end position="264"/>
    </location>
</feature>
<feature type="strand" evidence="2">
    <location>
        <begin position="266"/>
        <end position="277"/>
    </location>
</feature>
<feature type="strand" evidence="2">
    <location>
        <begin position="280"/>
        <end position="284"/>
    </location>
</feature>
<feature type="helix" evidence="2">
    <location>
        <begin position="291"/>
        <end position="308"/>
    </location>
</feature>
<sequence>MTIKRKKVSVIGAGFTGATTAFLLAQKELADVVLVDIPQLENPTKGKALDMLEASPVQGFDANIIGTSDYADTADSDVVVITAGIARKPGMSRDDLVATNSKIMKSITRDIAKHSPNAIIVVLTNPVDAMTYSVFKEAGFPKERVIGQSGVLDTARFRTFIAQELNLSVKDITGFVLGGHGDDMVPLVRYSYAGGIPLETLIPKERLEAIVERTRKGGGEIVGLLGNGSAYYAPAASLVEMTEAILKDQRRVLPAIAYLEGEYGYSDLYLGVPVILGGNGIEKIIELELLADEKEALDRSVESVRNVMKVLV</sequence>